<proteinExistence type="inferred from homology"/>
<sequence length="98" mass="11595">MRTYEVMYIVRPNIEEDAKKALVERFNGILATEGAEVLEAKDWGKRRLAYEINDFKDGFYNIVRVKSDNNKATDEFQRLAKISDDIIRYMVIREDEDK</sequence>
<feature type="chain" id="PRO_0000176839" description="Small ribosomal subunit protein bS6">
    <location>
        <begin position="1"/>
        <end position="98"/>
    </location>
</feature>
<gene>
    <name evidence="1" type="primary">rpsF</name>
    <name type="ordered locus">SAS0341</name>
</gene>
<name>RS6_STAAS</name>
<protein>
    <recommendedName>
        <fullName evidence="1">Small ribosomal subunit protein bS6</fullName>
    </recommendedName>
    <alternativeName>
        <fullName evidence="2">30S ribosomal protein S6</fullName>
    </alternativeName>
</protein>
<accession>Q6GCA7</accession>
<dbReference type="EMBL" id="BX571857">
    <property type="protein sequence ID" value="CAG42112.1"/>
    <property type="molecule type" value="Genomic_DNA"/>
</dbReference>
<dbReference type="RefSeq" id="WP_001261460.1">
    <property type="nucleotide sequence ID" value="NC_002953.3"/>
</dbReference>
<dbReference type="SMR" id="Q6GCA7"/>
<dbReference type="GeneID" id="98344691"/>
<dbReference type="KEGG" id="sas:SAS0341"/>
<dbReference type="HOGENOM" id="CLU_113441_5_3_9"/>
<dbReference type="GO" id="GO:0005737">
    <property type="term" value="C:cytoplasm"/>
    <property type="evidence" value="ECO:0007669"/>
    <property type="project" value="UniProtKB-ARBA"/>
</dbReference>
<dbReference type="GO" id="GO:1990904">
    <property type="term" value="C:ribonucleoprotein complex"/>
    <property type="evidence" value="ECO:0007669"/>
    <property type="project" value="UniProtKB-KW"/>
</dbReference>
<dbReference type="GO" id="GO:0005840">
    <property type="term" value="C:ribosome"/>
    <property type="evidence" value="ECO:0007669"/>
    <property type="project" value="UniProtKB-KW"/>
</dbReference>
<dbReference type="GO" id="GO:0070181">
    <property type="term" value="F:small ribosomal subunit rRNA binding"/>
    <property type="evidence" value="ECO:0007669"/>
    <property type="project" value="TreeGrafter"/>
</dbReference>
<dbReference type="GO" id="GO:0003735">
    <property type="term" value="F:structural constituent of ribosome"/>
    <property type="evidence" value="ECO:0007669"/>
    <property type="project" value="InterPro"/>
</dbReference>
<dbReference type="GO" id="GO:0006412">
    <property type="term" value="P:translation"/>
    <property type="evidence" value="ECO:0007669"/>
    <property type="project" value="UniProtKB-UniRule"/>
</dbReference>
<dbReference type="CDD" id="cd00473">
    <property type="entry name" value="bS6"/>
    <property type="match status" value="1"/>
</dbReference>
<dbReference type="FunFam" id="3.30.70.60:FF:000002">
    <property type="entry name" value="30S ribosomal protein S6"/>
    <property type="match status" value="1"/>
</dbReference>
<dbReference type="Gene3D" id="3.30.70.60">
    <property type="match status" value="1"/>
</dbReference>
<dbReference type="HAMAP" id="MF_00360">
    <property type="entry name" value="Ribosomal_bS6"/>
    <property type="match status" value="1"/>
</dbReference>
<dbReference type="InterPro" id="IPR000529">
    <property type="entry name" value="Ribosomal_bS6"/>
</dbReference>
<dbReference type="InterPro" id="IPR020815">
    <property type="entry name" value="Ribosomal_bS6_CS"/>
</dbReference>
<dbReference type="InterPro" id="IPR035980">
    <property type="entry name" value="Ribosomal_bS6_sf"/>
</dbReference>
<dbReference type="InterPro" id="IPR020814">
    <property type="entry name" value="Ribosomal_S6_plastid/chlpt"/>
</dbReference>
<dbReference type="InterPro" id="IPR014717">
    <property type="entry name" value="Transl_elong_EF1B/ribsomal_bS6"/>
</dbReference>
<dbReference type="NCBIfam" id="TIGR00166">
    <property type="entry name" value="S6"/>
    <property type="match status" value="1"/>
</dbReference>
<dbReference type="PANTHER" id="PTHR21011">
    <property type="entry name" value="MITOCHONDRIAL 28S RIBOSOMAL PROTEIN S6"/>
    <property type="match status" value="1"/>
</dbReference>
<dbReference type="PANTHER" id="PTHR21011:SF1">
    <property type="entry name" value="SMALL RIBOSOMAL SUBUNIT PROTEIN BS6M"/>
    <property type="match status" value="1"/>
</dbReference>
<dbReference type="Pfam" id="PF01250">
    <property type="entry name" value="Ribosomal_S6"/>
    <property type="match status" value="1"/>
</dbReference>
<dbReference type="SUPFAM" id="SSF54995">
    <property type="entry name" value="Ribosomal protein S6"/>
    <property type="match status" value="1"/>
</dbReference>
<dbReference type="PROSITE" id="PS01048">
    <property type="entry name" value="RIBOSOMAL_S6"/>
    <property type="match status" value="1"/>
</dbReference>
<organism>
    <name type="scientific">Staphylococcus aureus (strain MSSA476)</name>
    <dbReference type="NCBI Taxonomy" id="282459"/>
    <lineage>
        <taxon>Bacteria</taxon>
        <taxon>Bacillati</taxon>
        <taxon>Bacillota</taxon>
        <taxon>Bacilli</taxon>
        <taxon>Bacillales</taxon>
        <taxon>Staphylococcaceae</taxon>
        <taxon>Staphylococcus</taxon>
    </lineage>
</organism>
<reference key="1">
    <citation type="journal article" date="2004" name="Proc. Natl. Acad. Sci. U.S.A.">
        <title>Complete genomes of two clinical Staphylococcus aureus strains: evidence for the rapid evolution of virulence and drug resistance.</title>
        <authorList>
            <person name="Holden M.T.G."/>
            <person name="Feil E.J."/>
            <person name="Lindsay J.A."/>
            <person name="Peacock S.J."/>
            <person name="Day N.P.J."/>
            <person name="Enright M.C."/>
            <person name="Foster T.J."/>
            <person name="Moore C.E."/>
            <person name="Hurst L."/>
            <person name="Atkin R."/>
            <person name="Barron A."/>
            <person name="Bason N."/>
            <person name="Bentley S.D."/>
            <person name="Chillingworth C."/>
            <person name="Chillingworth T."/>
            <person name="Churcher C."/>
            <person name="Clark L."/>
            <person name="Corton C."/>
            <person name="Cronin A."/>
            <person name="Doggett J."/>
            <person name="Dowd L."/>
            <person name="Feltwell T."/>
            <person name="Hance Z."/>
            <person name="Harris B."/>
            <person name="Hauser H."/>
            <person name="Holroyd S."/>
            <person name="Jagels K."/>
            <person name="James K.D."/>
            <person name="Lennard N."/>
            <person name="Line A."/>
            <person name="Mayes R."/>
            <person name="Moule S."/>
            <person name="Mungall K."/>
            <person name="Ormond D."/>
            <person name="Quail M.A."/>
            <person name="Rabbinowitsch E."/>
            <person name="Rutherford K.M."/>
            <person name="Sanders M."/>
            <person name="Sharp S."/>
            <person name="Simmonds M."/>
            <person name="Stevens K."/>
            <person name="Whitehead S."/>
            <person name="Barrell B.G."/>
            <person name="Spratt B.G."/>
            <person name="Parkhill J."/>
        </authorList>
    </citation>
    <scope>NUCLEOTIDE SEQUENCE [LARGE SCALE GENOMIC DNA]</scope>
    <source>
        <strain>MSSA476</strain>
    </source>
</reference>
<evidence type="ECO:0000255" key="1">
    <source>
        <dbReference type="HAMAP-Rule" id="MF_00360"/>
    </source>
</evidence>
<evidence type="ECO:0000305" key="2"/>
<comment type="function">
    <text evidence="1">Binds together with bS18 to 16S ribosomal RNA.</text>
</comment>
<comment type="similarity">
    <text evidence="1">Belongs to the bacterial ribosomal protein bS6 family.</text>
</comment>
<keyword id="KW-0687">Ribonucleoprotein</keyword>
<keyword id="KW-0689">Ribosomal protein</keyword>
<keyword id="KW-0694">RNA-binding</keyword>
<keyword id="KW-0699">rRNA-binding</keyword>